<organism>
    <name type="scientific">Pyrococcus abyssi (strain GE5 / Orsay)</name>
    <dbReference type="NCBI Taxonomy" id="272844"/>
    <lineage>
        <taxon>Archaea</taxon>
        <taxon>Methanobacteriati</taxon>
        <taxon>Methanobacteriota</taxon>
        <taxon>Thermococci</taxon>
        <taxon>Thermococcales</taxon>
        <taxon>Thermococcaceae</taxon>
        <taxon>Pyrococcus</taxon>
    </lineage>
</organism>
<evidence type="ECO:0000255" key="1">
    <source>
        <dbReference type="HAMAP-Rule" id="MF_00310"/>
    </source>
</evidence>
<evidence type="ECO:0000305" key="2"/>
<name>AATB_PYRAB</name>
<gene>
    <name evidence="1" type="primary">atpB</name>
    <name type="ordered locus">PYRAB17600</name>
    <name type="ORF">PAB1186</name>
</gene>
<accession>Q9UXU8</accession>
<accession>G8ZKU3</accession>
<sequence length="462" mass="51833">MSKEYSTISKIYGPLMIVEGVKGVAYGEVVEIETESGEKRKGQVLDARENLAIVQVFEGTRDLDVKTTSVRFTGETLKVPVSMDMLGRIFNGIGKPIDGGPEIIPEDRRDVHGAPLNPVARAYPRDFIQTGISAIDGMNTLVRGQKLPIFSGSGLPHNQLAAQIARQAKVLGEEESFAVVFAAMGITYEEANFFKKSFEETGAIERAVLFLNLADDPAIERIITPRMALTVAEYLAFDYDMQVLVILTDMTNYCEALREISAAREEVPGRRGYPGYMYTDLATIYERAGRIRGKKGSITQMPILTMPDDDITHPIPDLTGYITEGQIVLSRELHRKGIYPPIDVLPSLSRLMKDGIGKGRTREDHPQLAQQLYAAYAEGRSLRDLVAVVGEEALSETDKKYLEFADRFEREFVAQGYYEDRSIEETLDLGWELLSILPESELKRVKKEMIMKYHPKYRKRSS</sequence>
<keyword id="KW-0066">ATP synthesis</keyword>
<keyword id="KW-1003">Cell membrane</keyword>
<keyword id="KW-0375">Hydrogen ion transport</keyword>
<keyword id="KW-0406">Ion transport</keyword>
<keyword id="KW-0472">Membrane</keyword>
<keyword id="KW-0813">Transport</keyword>
<feature type="chain" id="PRO_0000144661" description="A-type ATP synthase subunit B">
    <location>
        <begin position="1"/>
        <end position="462"/>
    </location>
</feature>
<reference key="1">
    <citation type="journal article" date="2003" name="Mol. Microbiol.">
        <title>An integrated analysis of the genome of the hyperthermophilic archaeon Pyrococcus abyssi.</title>
        <authorList>
            <person name="Cohen G.N."/>
            <person name="Barbe V."/>
            <person name="Flament D."/>
            <person name="Galperin M."/>
            <person name="Heilig R."/>
            <person name="Lecompte O."/>
            <person name="Poch O."/>
            <person name="Prieur D."/>
            <person name="Querellou J."/>
            <person name="Ripp R."/>
            <person name="Thierry J.-C."/>
            <person name="Van der Oost J."/>
            <person name="Weissenbach J."/>
            <person name="Zivanovic Y."/>
            <person name="Forterre P."/>
        </authorList>
    </citation>
    <scope>NUCLEOTIDE SEQUENCE [LARGE SCALE GENOMIC DNA]</scope>
    <source>
        <strain>GE5 / Orsay</strain>
    </source>
</reference>
<reference key="2">
    <citation type="journal article" date="2012" name="Curr. Microbiol.">
        <title>Re-annotation of two hyperthermophilic archaea Pyrococcus abyssi GE5 and Pyrococcus furiosus DSM 3638.</title>
        <authorList>
            <person name="Gao J."/>
            <person name="Wang J."/>
        </authorList>
    </citation>
    <scope>GENOME REANNOTATION</scope>
    <source>
        <strain>GE5 / Orsay</strain>
    </source>
</reference>
<protein>
    <recommendedName>
        <fullName evidence="1">A-type ATP synthase subunit B</fullName>
    </recommendedName>
</protein>
<proteinExistence type="inferred from homology"/>
<dbReference type="EMBL" id="AJ248288">
    <property type="protein sequence ID" value="CAB50665.1"/>
    <property type="status" value="ALT_INIT"/>
    <property type="molecule type" value="Genomic_DNA"/>
</dbReference>
<dbReference type="EMBL" id="HE613800">
    <property type="protein sequence ID" value="CCE71234.1"/>
    <property type="molecule type" value="Genomic_DNA"/>
</dbReference>
<dbReference type="PIR" id="C75028">
    <property type="entry name" value="C75028"/>
</dbReference>
<dbReference type="RefSeq" id="WP_048147353.1">
    <property type="nucleotide sequence ID" value="NC_000868.1"/>
</dbReference>
<dbReference type="SMR" id="Q9UXU8"/>
<dbReference type="STRING" id="272844.PAB1186"/>
<dbReference type="KEGG" id="pab:PAB1186"/>
<dbReference type="PATRIC" id="fig|272844.11.peg.1879"/>
<dbReference type="eggNOG" id="arCOG00865">
    <property type="taxonomic scope" value="Archaea"/>
</dbReference>
<dbReference type="HOGENOM" id="CLU_022916_0_0_2"/>
<dbReference type="OrthoDB" id="32941at2157"/>
<dbReference type="Proteomes" id="UP000000810">
    <property type="component" value="Chromosome"/>
</dbReference>
<dbReference type="Proteomes" id="UP000009139">
    <property type="component" value="Chromosome"/>
</dbReference>
<dbReference type="GO" id="GO:0005886">
    <property type="term" value="C:plasma membrane"/>
    <property type="evidence" value="ECO:0007669"/>
    <property type="project" value="UniProtKB-SubCell"/>
</dbReference>
<dbReference type="GO" id="GO:0033178">
    <property type="term" value="C:proton-transporting two-sector ATPase complex, catalytic domain"/>
    <property type="evidence" value="ECO:0007669"/>
    <property type="project" value="InterPro"/>
</dbReference>
<dbReference type="GO" id="GO:0005524">
    <property type="term" value="F:ATP binding"/>
    <property type="evidence" value="ECO:0007669"/>
    <property type="project" value="UniProtKB-UniRule"/>
</dbReference>
<dbReference type="GO" id="GO:0046933">
    <property type="term" value="F:proton-transporting ATP synthase activity, rotational mechanism"/>
    <property type="evidence" value="ECO:0007669"/>
    <property type="project" value="UniProtKB-UniRule"/>
</dbReference>
<dbReference type="GO" id="GO:0042777">
    <property type="term" value="P:proton motive force-driven plasma membrane ATP synthesis"/>
    <property type="evidence" value="ECO:0007669"/>
    <property type="project" value="UniProtKB-UniRule"/>
</dbReference>
<dbReference type="CDD" id="cd18112">
    <property type="entry name" value="ATP-synt_V_A-type_beta_C"/>
    <property type="match status" value="1"/>
</dbReference>
<dbReference type="CDD" id="cd18118">
    <property type="entry name" value="ATP-synt_V_A-type_beta_N"/>
    <property type="match status" value="1"/>
</dbReference>
<dbReference type="CDD" id="cd01135">
    <property type="entry name" value="V_A-ATPase_B"/>
    <property type="match status" value="1"/>
</dbReference>
<dbReference type="Gene3D" id="3.40.50.12240">
    <property type="match status" value="1"/>
</dbReference>
<dbReference type="HAMAP" id="MF_00310">
    <property type="entry name" value="ATP_synth_B_arch"/>
    <property type="match status" value="1"/>
</dbReference>
<dbReference type="InterPro" id="IPR055190">
    <property type="entry name" value="ATP-synt_VA_C"/>
</dbReference>
<dbReference type="InterPro" id="IPR020003">
    <property type="entry name" value="ATPase_a/bsu_AS"/>
</dbReference>
<dbReference type="InterPro" id="IPR005724">
    <property type="entry name" value="ATPase_A1-cplx_bsu"/>
</dbReference>
<dbReference type="InterPro" id="IPR004100">
    <property type="entry name" value="ATPase_F1/V1/A1_a/bsu_N"/>
</dbReference>
<dbReference type="InterPro" id="IPR000194">
    <property type="entry name" value="ATPase_F1/V1/A1_a/bsu_nucl-bd"/>
</dbReference>
<dbReference type="InterPro" id="IPR027417">
    <property type="entry name" value="P-loop_NTPase"/>
</dbReference>
<dbReference type="InterPro" id="IPR022879">
    <property type="entry name" value="V-ATPase_su_B/beta"/>
</dbReference>
<dbReference type="NCBIfam" id="TIGR01041">
    <property type="entry name" value="ATP_syn_B_arch"/>
    <property type="match status" value="1"/>
</dbReference>
<dbReference type="NCBIfam" id="NF003235">
    <property type="entry name" value="PRK04196.1"/>
    <property type="match status" value="1"/>
</dbReference>
<dbReference type="PANTHER" id="PTHR43389">
    <property type="entry name" value="V-TYPE PROTON ATPASE SUBUNIT B"/>
    <property type="match status" value="1"/>
</dbReference>
<dbReference type="PANTHER" id="PTHR43389:SF4">
    <property type="entry name" value="V-TYPE PROTON ATPASE SUBUNIT B"/>
    <property type="match status" value="1"/>
</dbReference>
<dbReference type="Pfam" id="PF00006">
    <property type="entry name" value="ATP-synt_ab"/>
    <property type="match status" value="1"/>
</dbReference>
<dbReference type="Pfam" id="PF02874">
    <property type="entry name" value="ATP-synt_ab_N"/>
    <property type="match status" value="1"/>
</dbReference>
<dbReference type="Pfam" id="PF22919">
    <property type="entry name" value="ATP-synt_VA_C"/>
    <property type="match status" value="1"/>
</dbReference>
<dbReference type="PIRSF" id="PIRSF039114">
    <property type="entry name" value="V-ATPsynth_beta/V-ATPase_B"/>
    <property type="match status" value="1"/>
</dbReference>
<dbReference type="SUPFAM" id="SSF47917">
    <property type="entry name" value="C-terminal domain of alpha and beta subunits of F1 ATP synthase"/>
    <property type="match status" value="1"/>
</dbReference>
<dbReference type="SUPFAM" id="SSF52540">
    <property type="entry name" value="P-loop containing nucleoside triphosphate hydrolases"/>
    <property type="match status" value="1"/>
</dbReference>
<dbReference type="PROSITE" id="PS00152">
    <property type="entry name" value="ATPASE_ALPHA_BETA"/>
    <property type="match status" value="1"/>
</dbReference>
<comment type="function">
    <text evidence="1">Component of the A-type ATP synthase that produces ATP from ADP in the presence of a proton gradient across the membrane. The B chain is a regulatory subunit.</text>
</comment>
<comment type="subunit">
    <text evidence="1">Has multiple subunits with at least A(3), B(3), C, D, E, F, H, I and proteolipid K(x).</text>
</comment>
<comment type="subcellular location">
    <subcellularLocation>
        <location evidence="1">Cell membrane</location>
        <topology evidence="1">Peripheral membrane protein</topology>
    </subcellularLocation>
</comment>
<comment type="similarity">
    <text evidence="1">Belongs to the ATPase alpha/beta chains family.</text>
</comment>
<comment type="sequence caution" evidence="2">
    <conflict type="erroneous initiation">
        <sequence resource="EMBL-CDS" id="CAB50665"/>
    </conflict>
    <text>Extended N-terminus.</text>
</comment>